<accession>Q8XCV0</accession>
<comment type="function">
    <text evidence="1">Could be a nuclease involved in processing of the 5'-end of pre-16S rRNA.</text>
</comment>
<comment type="subcellular location">
    <subcellularLocation>
        <location evidence="1">Cytoplasm</location>
    </subcellularLocation>
</comment>
<comment type="similarity">
    <text evidence="1">Belongs to the YqgF nuclease family.</text>
</comment>
<keyword id="KW-0963">Cytoplasm</keyword>
<keyword id="KW-0378">Hydrolase</keyword>
<keyword id="KW-0540">Nuclease</keyword>
<keyword id="KW-1185">Reference proteome</keyword>
<keyword id="KW-0690">Ribosome biogenesis</keyword>
<name>YQGF_ECO57</name>
<sequence length="138" mass="15200">MSGTLLAFDFGTKSIGVAVGQRITGTARPLPAIKAQDGTPDWNLIERLLKEWQPDEIIVGLPLNMDGTEQPLTARARKFANRIHGRFGVEVKLHDERLSTVEARSGLFEQGGYRALNKGKIDSASAVIILESYFEQGY</sequence>
<organism>
    <name type="scientific">Escherichia coli O157:H7</name>
    <dbReference type="NCBI Taxonomy" id="83334"/>
    <lineage>
        <taxon>Bacteria</taxon>
        <taxon>Pseudomonadati</taxon>
        <taxon>Pseudomonadota</taxon>
        <taxon>Gammaproteobacteria</taxon>
        <taxon>Enterobacterales</taxon>
        <taxon>Enterobacteriaceae</taxon>
        <taxon>Escherichia</taxon>
    </lineage>
</organism>
<gene>
    <name evidence="1" type="primary">yqgF</name>
    <name type="ordered locus">Z4294</name>
    <name type="ordered locus">ECs3825</name>
</gene>
<protein>
    <recommendedName>
        <fullName evidence="1">Putative pre-16S rRNA nuclease</fullName>
        <ecNumber evidence="1">3.1.-.-</ecNumber>
    </recommendedName>
</protein>
<evidence type="ECO:0000255" key="1">
    <source>
        <dbReference type="HAMAP-Rule" id="MF_00651"/>
    </source>
</evidence>
<reference key="1">
    <citation type="journal article" date="2001" name="Nature">
        <title>Genome sequence of enterohaemorrhagic Escherichia coli O157:H7.</title>
        <authorList>
            <person name="Perna N.T."/>
            <person name="Plunkett G. III"/>
            <person name="Burland V."/>
            <person name="Mau B."/>
            <person name="Glasner J.D."/>
            <person name="Rose D.J."/>
            <person name="Mayhew G.F."/>
            <person name="Evans P.S."/>
            <person name="Gregor J."/>
            <person name="Kirkpatrick H.A."/>
            <person name="Posfai G."/>
            <person name="Hackett J."/>
            <person name="Klink S."/>
            <person name="Boutin A."/>
            <person name="Shao Y."/>
            <person name="Miller L."/>
            <person name="Grotbeck E.J."/>
            <person name="Davis N.W."/>
            <person name="Lim A."/>
            <person name="Dimalanta E.T."/>
            <person name="Potamousis K."/>
            <person name="Apodaca J."/>
            <person name="Anantharaman T.S."/>
            <person name="Lin J."/>
            <person name="Yen G."/>
            <person name="Schwartz D.C."/>
            <person name="Welch R.A."/>
            <person name="Blattner F.R."/>
        </authorList>
    </citation>
    <scope>NUCLEOTIDE SEQUENCE [LARGE SCALE GENOMIC DNA]</scope>
    <source>
        <strain>O157:H7 / EDL933 / ATCC 700927 / EHEC</strain>
    </source>
</reference>
<reference key="2">
    <citation type="journal article" date="2001" name="DNA Res.">
        <title>Complete genome sequence of enterohemorrhagic Escherichia coli O157:H7 and genomic comparison with a laboratory strain K-12.</title>
        <authorList>
            <person name="Hayashi T."/>
            <person name="Makino K."/>
            <person name="Ohnishi M."/>
            <person name="Kurokawa K."/>
            <person name="Ishii K."/>
            <person name="Yokoyama K."/>
            <person name="Han C.-G."/>
            <person name="Ohtsubo E."/>
            <person name="Nakayama K."/>
            <person name="Murata T."/>
            <person name="Tanaka M."/>
            <person name="Tobe T."/>
            <person name="Iida T."/>
            <person name="Takami H."/>
            <person name="Honda T."/>
            <person name="Sasakawa C."/>
            <person name="Ogasawara N."/>
            <person name="Yasunaga T."/>
            <person name="Kuhara S."/>
            <person name="Shiba T."/>
            <person name="Hattori M."/>
            <person name="Shinagawa H."/>
        </authorList>
    </citation>
    <scope>NUCLEOTIDE SEQUENCE [LARGE SCALE GENOMIC DNA]</scope>
    <source>
        <strain>O157:H7 / Sakai / RIMD 0509952 / EHEC</strain>
    </source>
</reference>
<dbReference type="EC" id="3.1.-.-" evidence="1"/>
<dbReference type="EMBL" id="AE005174">
    <property type="protein sequence ID" value="AAG58080.1"/>
    <property type="molecule type" value="Genomic_DNA"/>
</dbReference>
<dbReference type="EMBL" id="BA000007">
    <property type="protein sequence ID" value="BAB37248.1"/>
    <property type="molecule type" value="Genomic_DNA"/>
</dbReference>
<dbReference type="PIR" id="A98107">
    <property type="entry name" value="A98107"/>
</dbReference>
<dbReference type="PIR" id="D85952">
    <property type="entry name" value="D85952"/>
</dbReference>
<dbReference type="RefSeq" id="NP_311852.1">
    <property type="nucleotide sequence ID" value="NC_002695.1"/>
</dbReference>
<dbReference type="SMR" id="Q8XCV0"/>
<dbReference type="STRING" id="155864.Z4294"/>
<dbReference type="GeneID" id="916455"/>
<dbReference type="KEGG" id="ece:Z4294"/>
<dbReference type="KEGG" id="ecs:ECs_3825"/>
<dbReference type="PATRIC" id="fig|386585.9.peg.3991"/>
<dbReference type="eggNOG" id="COG0816">
    <property type="taxonomic scope" value="Bacteria"/>
</dbReference>
<dbReference type="HOGENOM" id="CLU_098240_3_0_6"/>
<dbReference type="OMA" id="PMGWTAQ"/>
<dbReference type="Proteomes" id="UP000000558">
    <property type="component" value="Chromosome"/>
</dbReference>
<dbReference type="Proteomes" id="UP000002519">
    <property type="component" value="Chromosome"/>
</dbReference>
<dbReference type="GO" id="GO:0005829">
    <property type="term" value="C:cytosol"/>
    <property type="evidence" value="ECO:0007669"/>
    <property type="project" value="TreeGrafter"/>
</dbReference>
<dbReference type="GO" id="GO:0004518">
    <property type="term" value="F:nuclease activity"/>
    <property type="evidence" value="ECO:0007669"/>
    <property type="project" value="UniProtKB-KW"/>
</dbReference>
<dbReference type="GO" id="GO:0000967">
    <property type="term" value="P:rRNA 5'-end processing"/>
    <property type="evidence" value="ECO:0007669"/>
    <property type="project" value="UniProtKB-UniRule"/>
</dbReference>
<dbReference type="CDD" id="cd16964">
    <property type="entry name" value="YqgF"/>
    <property type="match status" value="1"/>
</dbReference>
<dbReference type="FunFam" id="3.30.420.140:FF:000002">
    <property type="entry name" value="Putative pre-16S rRNA nuclease"/>
    <property type="match status" value="1"/>
</dbReference>
<dbReference type="Gene3D" id="3.30.420.140">
    <property type="entry name" value="YqgF/RNase H-like domain"/>
    <property type="match status" value="1"/>
</dbReference>
<dbReference type="HAMAP" id="MF_00651">
    <property type="entry name" value="Nuclease_YqgF"/>
    <property type="match status" value="1"/>
</dbReference>
<dbReference type="InterPro" id="IPR012337">
    <property type="entry name" value="RNaseH-like_sf"/>
</dbReference>
<dbReference type="InterPro" id="IPR005227">
    <property type="entry name" value="YqgF"/>
</dbReference>
<dbReference type="InterPro" id="IPR006641">
    <property type="entry name" value="YqgF/RNaseH-like_dom"/>
</dbReference>
<dbReference type="InterPro" id="IPR037027">
    <property type="entry name" value="YqgF/RNaseH-like_dom_sf"/>
</dbReference>
<dbReference type="NCBIfam" id="TIGR00250">
    <property type="entry name" value="RNAse_H_YqgF"/>
    <property type="match status" value="1"/>
</dbReference>
<dbReference type="PANTHER" id="PTHR33317">
    <property type="entry name" value="POLYNUCLEOTIDYL TRANSFERASE, RIBONUCLEASE H-LIKE SUPERFAMILY PROTEIN"/>
    <property type="match status" value="1"/>
</dbReference>
<dbReference type="PANTHER" id="PTHR33317:SF4">
    <property type="entry name" value="POLYNUCLEOTIDYL TRANSFERASE, RIBONUCLEASE H-LIKE SUPERFAMILY PROTEIN"/>
    <property type="match status" value="1"/>
</dbReference>
<dbReference type="Pfam" id="PF03652">
    <property type="entry name" value="RuvX"/>
    <property type="match status" value="1"/>
</dbReference>
<dbReference type="SMART" id="SM00732">
    <property type="entry name" value="YqgFc"/>
    <property type="match status" value="1"/>
</dbReference>
<dbReference type="SUPFAM" id="SSF53098">
    <property type="entry name" value="Ribonuclease H-like"/>
    <property type="match status" value="1"/>
</dbReference>
<proteinExistence type="inferred from homology"/>
<feature type="chain" id="PRO_0000172059" description="Putative pre-16S rRNA nuclease">
    <location>
        <begin position="1"/>
        <end position="138"/>
    </location>
</feature>